<sequence>MAKIIGIDLGTTNSCVAVLEGDKVKVIENAEGARTTPSIIAYKDGEILVGQSAKRQAVTNPKNTLFAIKRLIGRRYEDQAVQKDIGLVPYKIIKADNGDAWVEVNDKKLAPQQISAEILKKMKKTAEDYLGETVTEAVITVPAYFNDAQRQATKDAGKIAGLDVKRIINEPTAAALAFGMDKKEGDRKVAVYDLGGGTFDVSIIEIADLDGDQQIEVLSTNGDTFLGGEDFDNALIEYLVEEFKKEQNVNLKNDPLALQRLKEAAEKAKIELSSSNATEINLPYITADATGPKHLVINVTRAKLEGLVADLVARTIEPCKIALKDAGLSTSDISDVILVGGQSRMPLVQQKVQEFFGREPRKDVNPDEAVAIGAAIQGAVLSGDKNDVLLLDVTPLTLGIETMGGVLTPIIEKNTTIPAKKSQVFSTAADNQPAVDISVYQGERKMAQQNKLLGNFQLGDIPPAPRGVPQIEVSFDINADGILKVSAKDKSTGKEQSIQIKANSGLSDAEIEAMIKDAEANAEEDRKFEELAKARNEADALISSSNKAVKDLGDKVTEDEKTAVNTAVSELEAATKENDVEVIKAKTEALQNILMPITQRAYEQAQQAGGAEGFDPNAFQGGDAGQQKADDGVVDAEFTEVKDDKK</sequence>
<dbReference type="EMBL" id="CU459141">
    <property type="protein sequence ID" value="CAM88621.1"/>
    <property type="molecule type" value="Genomic_DNA"/>
</dbReference>
<dbReference type="RefSeq" id="WP_001062607.1">
    <property type="nucleotide sequence ID" value="NZ_JBDGFB010000012.1"/>
</dbReference>
<dbReference type="SMR" id="B0V5U4"/>
<dbReference type="EnsemblBacteria" id="CAM88621">
    <property type="protein sequence ID" value="CAM88621"/>
    <property type="gene ID" value="ABAYE3865"/>
</dbReference>
<dbReference type="KEGG" id="aby:ABAYE3865"/>
<dbReference type="HOGENOM" id="CLU_005965_2_4_6"/>
<dbReference type="GO" id="GO:0005524">
    <property type="term" value="F:ATP binding"/>
    <property type="evidence" value="ECO:0007669"/>
    <property type="project" value="UniProtKB-UniRule"/>
</dbReference>
<dbReference type="GO" id="GO:0140662">
    <property type="term" value="F:ATP-dependent protein folding chaperone"/>
    <property type="evidence" value="ECO:0007669"/>
    <property type="project" value="InterPro"/>
</dbReference>
<dbReference type="GO" id="GO:0051082">
    <property type="term" value="F:unfolded protein binding"/>
    <property type="evidence" value="ECO:0007669"/>
    <property type="project" value="InterPro"/>
</dbReference>
<dbReference type="CDD" id="cd10234">
    <property type="entry name" value="ASKHA_NBD_HSP70_DnaK-like"/>
    <property type="match status" value="1"/>
</dbReference>
<dbReference type="FunFam" id="2.60.34.10:FF:000014">
    <property type="entry name" value="Chaperone protein DnaK HSP70"/>
    <property type="match status" value="1"/>
</dbReference>
<dbReference type="FunFam" id="1.20.1270.10:FF:000001">
    <property type="entry name" value="Molecular chaperone DnaK"/>
    <property type="match status" value="1"/>
</dbReference>
<dbReference type="FunFam" id="3.30.420.40:FF:000004">
    <property type="entry name" value="Molecular chaperone DnaK"/>
    <property type="match status" value="1"/>
</dbReference>
<dbReference type="FunFam" id="3.90.640.10:FF:000003">
    <property type="entry name" value="Molecular chaperone DnaK"/>
    <property type="match status" value="1"/>
</dbReference>
<dbReference type="Gene3D" id="1.20.1270.10">
    <property type="match status" value="1"/>
</dbReference>
<dbReference type="Gene3D" id="3.30.420.40">
    <property type="match status" value="2"/>
</dbReference>
<dbReference type="Gene3D" id="3.90.640.10">
    <property type="entry name" value="Actin, Chain A, domain 4"/>
    <property type="match status" value="1"/>
</dbReference>
<dbReference type="Gene3D" id="2.60.34.10">
    <property type="entry name" value="Substrate Binding Domain Of DNAk, Chain A, domain 1"/>
    <property type="match status" value="1"/>
</dbReference>
<dbReference type="HAMAP" id="MF_00332">
    <property type="entry name" value="DnaK"/>
    <property type="match status" value="1"/>
</dbReference>
<dbReference type="InterPro" id="IPR043129">
    <property type="entry name" value="ATPase_NBD"/>
</dbReference>
<dbReference type="InterPro" id="IPR012725">
    <property type="entry name" value="Chaperone_DnaK"/>
</dbReference>
<dbReference type="InterPro" id="IPR018181">
    <property type="entry name" value="Heat_shock_70_CS"/>
</dbReference>
<dbReference type="InterPro" id="IPR029048">
    <property type="entry name" value="HSP70_C_sf"/>
</dbReference>
<dbReference type="InterPro" id="IPR029047">
    <property type="entry name" value="HSP70_peptide-bd_sf"/>
</dbReference>
<dbReference type="InterPro" id="IPR013126">
    <property type="entry name" value="Hsp_70_fam"/>
</dbReference>
<dbReference type="NCBIfam" id="NF001413">
    <property type="entry name" value="PRK00290.1"/>
    <property type="match status" value="1"/>
</dbReference>
<dbReference type="NCBIfam" id="TIGR02350">
    <property type="entry name" value="prok_dnaK"/>
    <property type="match status" value="1"/>
</dbReference>
<dbReference type="PANTHER" id="PTHR19375">
    <property type="entry name" value="HEAT SHOCK PROTEIN 70KDA"/>
    <property type="match status" value="1"/>
</dbReference>
<dbReference type="Pfam" id="PF00012">
    <property type="entry name" value="HSP70"/>
    <property type="match status" value="1"/>
</dbReference>
<dbReference type="PRINTS" id="PR00301">
    <property type="entry name" value="HEATSHOCK70"/>
</dbReference>
<dbReference type="SUPFAM" id="SSF53067">
    <property type="entry name" value="Actin-like ATPase domain"/>
    <property type="match status" value="2"/>
</dbReference>
<dbReference type="SUPFAM" id="SSF100934">
    <property type="entry name" value="Heat shock protein 70kD (HSP70), C-terminal subdomain"/>
    <property type="match status" value="1"/>
</dbReference>
<dbReference type="SUPFAM" id="SSF100920">
    <property type="entry name" value="Heat shock protein 70kD (HSP70), peptide-binding domain"/>
    <property type="match status" value="1"/>
</dbReference>
<dbReference type="PROSITE" id="PS00297">
    <property type="entry name" value="HSP70_1"/>
    <property type="match status" value="1"/>
</dbReference>
<dbReference type="PROSITE" id="PS00329">
    <property type="entry name" value="HSP70_2"/>
    <property type="match status" value="1"/>
</dbReference>
<dbReference type="PROSITE" id="PS01036">
    <property type="entry name" value="HSP70_3"/>
    <property type="match status" value="1"/>
</dbReference>
<keyword id="KW-0067">ATP-binding</keyword>
<keyword id="KW-0143">Chaperone</keyword>
<keyword id="KW-0547">Nucleotide-binding</keyword>
<keyword id="KW-0597">Phosphoprotein</keyword>
<keyword id="KW-0346">Stress response</keyword>
<proteinExistence type="inferred from homology"/>
<comment type="function">
    <text evidence="1">Acts as a chaperone.</text>
</comment>
<comment type="induction">
    <text evidence="1">By stress conditions e.g. heat shock.</text>
</comment>
<comment type="similarity">
    <text evidence="1">Belongs to the heat shock protein 70 family.</text>
</comment>
<accession>B0V5U4</accession>
<feature type="chain" id="PRO_1000119655" description="Chaperone protein DnaK">
    <location>
        <begin position="1"/>
        <end position="646"/>
    </location>
</feature>
<feature type="region of interest" description="Disordered" evidence="2">
    <location>
        <begin position="603"/>
        <end position="646"/>
    </location>
</feature>
<feature type="compositionally biased region" description="Low complexity" evidence="2">
    <location>
        <begin position="618"/>
        <end position="627"/>
    </location>
</feature>
<feature type="modified residue" description="Phosphothreonine; by autocatalysis" evidence="1">
    <location>
        <position position="198"/>
    </location>
</feature>
<gene>
    <name evidence="1" type="primary">dnaK</name>
    <name type="ordered locus">ABAYE3865</name>
</gene>
<reference key="1">
    <citation type="journal article" date="2008" name="PLoS ONE">
        <title>Comparative analysis of Acinetobacters: three genomes for three lifestyles.</title>
        <authorList>
            <person name="Vallenet D."/>
            <person name="Nordmann P."/>
            <person name="Barbe V."/>
            <person name="Poirel L."/>
            <person name="Mangenot S."/>
            <person name="Bataille E."/>
            <person name="Dossat C."/>
            <person name="Gas S."/>
            <person name="Kreimeyer A."/>
            <person name="Lenoble P."/>
            <person name="Oztas S."/>
            <person name="Poulain J."/>
            <person name="Segurens B."/>
            <person name="Robert C."/>
            <person name="Abergel C."/>
            <person name="Claverie J.-M."/>
            <person name="Raoult D."/>
            <person name="Medigue C."/>
            <person name="Weissenbach J."/>
            <person name="Cruveiller S."/>
        </authorList>
    </citation>
    <scope>NUCLEOTIDE SEQUENCE [LARGE SCALE GENOMIC DNA]</scope>
    <source>
        <strain>AYE</strain>
    </source>
</reference>
<protein>
    <recommendedName>
        <fullName evidence="1">Chaperone protein DnaK</fullName>
    </recommendedName>
    <alternativeName>
        <fullName evidence="1">HSP70</fullName>
    </alternativeName>
    <alternativeName>
        <fullName evidence="1">Heat shock 70 kDa protein</fullName>
    </alternativeName>
    <alternativeName>
        <fullName evidence="1">Heat shock protein 70</fullName>
    </alternativeName>
</protein>
<organism>
    <name type="scientific">Acinetobacter baumannii (strain AYE)</name>
    <dbReference type="NCBI Taxonomy" id="509173"/>
    <lineage>
        <taxon>Bacteria</taxon>
        <taxon>Pseudomonadati</taxon>
        <taxon>Pseudomonadota</taxon>
        <taxon>Gammaproteobacteria</taxon>
        <taxon>Moraxellales</taxon>
        <taxon>Moraxellaceae</taxon>
        <taxon>Acinetobacter</taxon>
        <taxon>Acinetobacter calcoaceticus/baumannii complex</taxon>
    </lineage>
</organism>
<evidence type="ECO:0000255" key="1">
    <source>
        <dbReference type="HAMAP-Rule" id="MF_00332"/>
    </source>
</evidence>
<evidence type="ECO:0000256" key="2">
    <source>
        <dbReference type="SAM" id="MobiDB-lite"/>
    </source>
</evidence>
<name>DNAK_ACIBY</name>